<reference key="1">
    <citation type="journal article" date="2005" name="Nature">
        <title>Genome sequencing and analysis of Aspergillus oryzae.</title>
        <authorList>
            <person name="Machida M."/>
            <person name="Asai K."/>
            <person name="Sano M."/>
            <person name="Tanaka T."/>
            <person name="Kumagai T."/>
            <person name="Terai G."/>
            <person name="Kusumoto K."/>
            <person name="Arima T."/>
            <person name="Akita O."/>
            <person name="Kashiwagi Y."/>
            <person name="Abe K."/>
            <person name="Gomi K."/>
            <person name="Horiuchi H."/>
            <person name="Kitamoto K."/>
            <person name="Kobayashi T."/>
            <person name="Takeuchi M."/>
            <person name="Denning D.W."/>
            <person name="Galagan J.E."/>
            <person name="Nierman W.C."/>
            <person name="Yu J."/>
            <person name="Archer D.B."/>
            <person name="Bennett J.W."/>
            <person name="Bhatnagar D."/>
            <person name="Cleveland T.E."/>
            <person name="Fedorova N.D."/>
            <person name="Gotoh O."/>
            <person name="Horikawa H."/>
            <person name="Hosoyama A."/>
            <person name="Ichinomiya M."/>
            <person name="Igarashi R."/>
            <person name="Iwashita K."/>
            <person name="Juvvadi P.R."/>
            <person name="Kato M."/>
            <person name="Kato Y."/>
            <person name="Kin T."/>
            <person name="Kokubun A."/>
            <person name="Maeda H."/>
            <person name="Maeyama N."/>
            <person name="Maruyama J."/>
            <person name="Nagasaki H."/>
            <person name="Nakajima T."/>
            <person name="Oda K."/>
            <person name="Okada K."/>
            <person name="Paulsen I."/>
            <person name="Sakamoto K."/>
            <person name="Sawano T."/>
            <person name="Takahashi M."/>
            <person name="Takase K."/>
            <person name="Terabayashi Y."/>
            <person name="Wortman J.R."/>
            <person name="Yamada O."/>
            <person name="Yamagata Y."/>
            <person name="Anazawa H."/>
            <person name="Hata Y."/>
            <person name="Koide Y."/>
            <person name="Komori T."/>
            <person name="Koyama Y."/>
            <person name="Minetoki T."/>
            <person name="Suharnan S."/>
            <person name="Tanaka A."/>
            <person name="Isono K."/>
            <person name="Kuhara S."/>
            <person name="Ogasawara N."/>
            <person name="Kikuchi H."/>
        </authorList>
    </citation>
    <scope>NUCLEOTIDE SEQUENCE [LARGE SCALE GENOMIC DNA]</scope>
    <source>
        <strain>ATCC 42149 / RIB 40</strain>
    </source>
</reference>
<feature type="transit peptide" description="Mitochondrion" evidence="1">
    <location>
        <begin position="1"/>
        <end position="49"/>
    </location>
</feature>
<feature type="chain" id="PRO_0000413248" description="Glutamyl-tRNA(Gln) amidotransferase subunit B, mitochondrial">
    <location>
        <begin position="50"/>
        <end position="593"/>
    </location>
</feature>
<feature type="region of interest" description="Disordered" evidence="2">
    <location>
        <begin position="27"/>
        <end position="80"/>
    </location>
</feature>
<feature type="compositionally biased region" description="Low complexity" evidence="2">
    <location>
        <begin position="27"/>
        <end position="42"/>
    </location>
</feature>
<feature type="compositionally biased region" description="Basic and acidic residues" evidence="2">
    <location>
        <begin position="66"/>
        <end position="80"/>
    </location>
</feature>
<keyword id="KW-0067">ATP-binding</keyword>
<keyword id="KW-0436">Ligase</keyword>
<keyword id="KW-0496">Mitochondrion</keyword>
<keyword id="KW-0547">Nucleotide-binding</keyword>
<keyword id="KW-0648">Protein biosynthesis</keyword>
<keyword id="KW-1185">Reference proteome</keyword>
<keyword id="KW-0809">Transit peptide</keyword>
<organism>
    <name type="scientific">Aspergillus oryzae (strain ATCC 42149 / RIB 40)</name>
    <name type="common">Yellow koji mold</name>
    <dbReference type="NCBI Taxonomy" id="510516"/>
    <lineage>
        <taxon>Eukaryota</taxon>
        <taxon>Fungi</taxon>
        <taxon>Dikarya</taxon>
        <taxon>Ascomycota</taxon>
        <taxon>Pezizomycotina</taxon>
        <taxon>Eurotiomycetes</taxon>
        <taxon>Eurotiomycetidae</taxon>
        <taxon>Eurotiales</taxon>
        <taxon>Aspergillaceae</taxon>
        <taxon>Aspergillus</taxon>
        <taxon>Aspergillus subgen. Circumdati</taxon>
    </lineage>
</organism>
<protein>
    <recommendedName>
        <fullName evidence="1">Glutamyl-tRNA(Gln) amidotransferase subunit B, mitochondrial</fullName>
        <shortName evidence="1">Glu-AdT subunit B</shortName>
        <ecNumber evidence="1">6.3.5.-</ecNumber>
    </recommendedName>
</protein>
<name>GATB_ASPOR</name>
<accession>Q2UKS0</accession>
<comment type="function">
    <text evidence="1">Allows the formation of correctly charged Gln-tRNA(Gln) through the transamidation of misacylated Glu-tRNA(Gln) in the mitochondria. The reaction takes place in the presence of glutamine and ATP through an activated gamma-phospho-Glu-tRNA(Gln).</text>
</comment>
<comment type="catalytic activity">
    <reaction evidence="1">
        <text>L-glutamyl-tRNA(Gln) + L-glutamine + ATP + H2O = L-glutaminyl-tRNA(Gln) + L-glutamate + ADP + phosphate + H(+)</text>
        <dbReference type="Rhea" id="RHEA:17521"/>
        <dbReference type="Rhea" id="RHEA-COMP:9681"/>
        <dbReference type="Rhea" id="RHEA-COMP:9684"/>
        <dbReference type="ChEBI" id="CHEBI:15377"/>
        <dbReference type="ChEBI" id="CHEBI:15378"/>
        <dbReference type="ChEBI" id="CHEBI:29985"/>
        <dbReference type="ChEBI" id="CHEBI:30616"/>
        <dbReference type="ChEBI" id="CHEBI:43474"/>
        <dbReference type="ChEBI" id="CHEBI:58359"/>
        <dbReference type="ChEBI" id="CHEBI:78520"/>
        <dbReference type="ChEBI" id="CHEBI:78521"/>
        <dbReference type="ChEBI" id="CHEBI:456216"/>
    </reaction>
</comment>
<comment type="subunit">
    <text evidence="1">Subunit of the heterotrimeric GatCAB amidotransferase (AdT) complex, composed of A, B and C subunits.</text>
</comment>
<comment type="subcellular location">
    <subcellularLocation>
        <location evidence="1">Mitochondrion</location>
    </subcellularLocation>
</comment>
<comment type="similarity">
    <text evidence="1">Belongs to the GatB/GatE family. GatB subfamily.</text>
</comment>
<sequence length="593" mass="65867">MLRPWLRQSTRAARSLPCCQCPRPYSSRLPTLTSPSSSVRRLQTSASESQDRVPLRKQLKQNAKALKAEKRQRRESEEASRQKWELTVGIEIHAQLNTETKLFSRASTSSTDLPNSNVALFDLAFPGSQPEFQVPTLLPALRAALALNCDIQPVSRFDRKHYFYQDQPAGYQITQYYEPFARNGYVDLFGYDGIAPEDGDHVRIGIKQVQLEQDTAKSQEYHPSTQLLDFNRVSHPLVEIITMPQIHTPATAAACVRKIQAILQSCSAVTTGMELGGLRADVNVSIRQRGDTEGVHQYGGIGGLGQRTEIKNLSSFKAVEDAIIAEKNRQIAVLESGGVVEGETRGWTIGSTETRRLRGKEGEVDYRYMPDPDLPPLLIGADLVSELANTLPTSSDELIGLLTGKEYGLSIEDAKPLVELEDGARLEYYQDVVDILRDLQQDQDPKSRGGLARVAGNWVLHELGGLLTKADLPWDAERVSALSLAQIIDHVQRKQITGPTAKQVLAMVFDGDTRAIPQLLEEENLLLRPLSREEYVALAEAAISQNPQMVEQIRTKNQLGKLGWFVGQMMRMGEKGRVEAPKADAILRELILG</sequence>
<gene>
    <name type="ORF">AO090003000698</name>
</gene>
<evidence type="ECO:0000255" key="1">
    <source>
        <dbReference type="HAMAP-Rule" id="MF_03147"/>
    </source>
</evidence>
<evidence type="ECO:0000256" key="2">
    <source>
        <dbReference type="SAM" id="MobiDB-lite"/>
    </source>
</evidence>
<dbReference type="EC" id="6.3.5.-" evidence="1"/>
<dbReference type="EMBL" id="BA000050">
    <property type="protein sequence ID" value="BAE57845.1"/>
    <property type="molecule type" value="Genomic_DNA"/>
</dbReference>
<dbReference type="RefSeq" id="XP_023090059.1">
    <property type="nucleotide sequence ID" value="XM_023234996.1"/>
</dbReference>
<dbReference type="SMR" id="Q2UKS0"/>
<dbReference type="STRING" id="510516.Q2UKS0"/>
<dbReference type="EnsemblFungi" id="BAE57845">
    <property type="protein sequence ID" value="BAE57845"/>
    <property type="gene ID" value="AO090003000698"/>
</dbReference>
<dbReference type="GeneID" id="5991830"/>
<dbReference type="VEuPathDB" id="FungiDB:AO090003000698"/>
<dbReference type="HOGENOM" id="CLU_019240_4_1_1"/>
<dbReference type="OMA" id="ARKWWMG"/>
<dbReference type="Proteomes" id="UP000006564">
    <property type="component" value="Chromosome 2"/>
</dbReference>
<dbReference type="GO" id="GO:0030956">
    <property type="term" value="C:glutamyl-tRNA(Gln) amidotransferase complex"/>
    <property type="evidence" value="ECO:0007669"/>
    <property type="project" value="UniProtKB-UniRule"/>
</dbReference>
<dbReference type="GO" id="GO:0005739">
    <property type="term" value="C:mitochondrion"/>
    <property type="evidence" value="ECO:0007669"/>
    <property type="project" value="UniProtKB-SubCell"/>
</dbReference>
<dbReference type="GO" id="GO:0005524">
    <property type="term" value="F:ATP binding"/>
    <property type="evidence" value="ECO:0007669"/>
    <property type="project" value="UniProtKB-KW"/>
</dbReference>
<dbReference type="GO" id="GO:0050567">
    <property type="term" value="F:glutaminyl-tRNA synthase (glutamine-hydrolyzing) activity"/>
    <property type="evidence" value="ECO:0007669"/>
    <property type="project" value="UniProtKB-UniRule"/>
</dbReference>
<dbReference type="GO" id="GO:0070681">
    <property type="term" value="P:glutaminyl-tRNAGln biosynthesis via transamidation"/>
    <property type="evidence" value="ECO:0007669"/>
    <property type="project" value="UniProtKB-UniRule"/>
</dbReference>
<dbReference type="GO" id="GO:0032543">
    <property type="term" value="P:mitochondrial translation"/>
    <property type="evidence" value="ECO:0007669"/>
    <property type="project" value="UniProtKB-UniRule"/>
</dbReference>
<dbReference type="Gene3D" id="1.10.10.410">
    <property type="match status" value="1"/>
</dbReference>
<dbReference type="HAMAP" id="MF_00121">
    <property type="entry name" value="GatB"/>
    <property type="match status" value="1"/>
</dbReference>
<dbReference type="InterPro" id="IPR017959">
    <property type="entry name" value="Asn/Gln-tRNA_amidoTrfase_suB/E"/>
</dbReference>
<dbReference type="InterPro" id="IPR006075">
    <property type="entry name" value="Asn/Gln-tRNA_Trfase_suB/E_cat"/>
</dbReference>
<dbReference type="InterPro" id="IPR018027">
    <property type="entry name" value="Asn/Gln_amidotransferase"/>
</dbReference>
<dbReference type="InterPro" id="IPR003789">
    <property type="entry name" value="Asn/Gln_tRNA_amidoTrase-B-like"/>
</dbReference>
<dbReference type="InterPro" id="IPR004413">
    <property type="entry name" value="GatB"/>
</dbReference>
<dbReference type="InterPro" id="IPR023168">
    <property type="entry name" value="GatB_Yqey_C_2"/>
</dbReference>
<dbReference type="InterPro" id="IPR017958">
    <property type="entry name" value="Gln-tRNA_amidoTrfase_suB_CS"/>
</dbReference>
<dbReference type="InterPro" id="IPR014746">
    <property type="entry name" value="Gln_synth/guanido_kin_cat_dom"/>
</dbReference>
<dbReference type="NCBIfam" id="TIGR00133">
    <property type="entry name" value="gatB"/>
    <property type="match status" value="1"/>
</dbReference>
<dbReference type="NCBIfam" id="NF004012">
    <property type="entry name" value="PRK05477.1-2"/>
    <property type="match status" value="1"/>
</dbReference>
<dbReference type="PANTHER" id="PTHR11659">
    <property type="entry name" value="GLUTAMYL-TRNA GLN AMIDOTRANSFERASE SUBUNIT B MITOCHONDRIAL AND PROKARYOTIC PET112-RELATED"/>
    <property type="match status" value="1"/>
</dbReference>
<dbReference type="PANTHER" id="PTHR11659:SF0">
    <property type="entry name" value="GLUTAMYL-TRNA(GLN) AMIDOTRANSFERASE SUBUNIT B, MITOCHONDRIAL"/>
    <property type="match status" value="1"/>
</dbReference>
<dbReference type="Pfam" id="PF02934">
    <property type="entry name" value="GatB_N"/>
    <property type="match status" value="1"/>
</dbReference>
<dbReference type="Pfam" id="PF02637">
    <property type="entry name" value="GatB_Yqey"/>
    <property type="match status" value="1"/>
</dbReference>
<dbReference type="SMART" id="SM00845">
    <property type="entry name" value="GatB_Yqey"/>
    <property type="match status" value="1"/>
</dbReference>
<dbReference type="SUPFAM" id="SSF89095">
    <property type="entry name" value="GatB/YqeY motif"/>
    <property type="match status" value="1"/>
</dbReference>
<dbReference type="SUPFAM" id="SSF55931">
    <property type="entry name" value="Glutamine synthetase/guanido kinase"/>
    <property type="match status" value="1"/>
</dbReference>
<dbReference type="PROSITE" id="PS01234">
    <property type="entry name" value="GATB"/>
    <property type="match status" value="1"/>
</dbReference>
<proteinExistence type="inferred from homology"/>